<organism>
    <name type="scientific">Synechococcus sp. (strain JA-2-3B'a(2-13))</name>
    <name type="common">Cyanobacteria bacterium Yellowstone B-Prime</name>
    <dbReference type="NCBI Taxonomy" id="321332"/>
    <lineage>
        <taxon>Bacteria</taxon>
        <taxon>Bacillati</taxon>
        <taxon>Cyanobacteriota</taxon>
        <taxon>Cyanophyceae</taxon>
        <taxon>Synechococcales</taxon>
        <taxon>Synechococcaceae</taxon>
        <taxon>Synechococcus</taxon>
    </lineage>
</organism>
<proteinExistence type="inferred from homology"/>
<reference key="1">
    <citation type="journal article" date="2007" name="ISME J.">
        <title>Population level functional diversity in a microbial community revealed by comparative genomic and metagenomic analyses.</title>
        <authorList>
            <person name="Bhaya D."/>
            <person name="Grossman A.R."/>
            <person name="Steunou A.-S."/>
            <person name="Khuri N."/>
            <person name="Cohan F.M."/>
            <person name="Hamamura N."/>
            <person name="Melendrez M.C."/>
            <person name="Bateson M.M."/>
            <person name="Ward D.M."/>
            <person name="Heidelberg J.F."/>
        </authorList>
    </citation>
    <scope>NUCLEOTIDE SEQUENCE [LARGE SCALE GENOMIC DNA]</scope>
    <source>
        <strain>JA-2-3B'a(2-13)</strain>
    </source>
</reference>
<dbReference type="EC" id="6.3.5.3" evidence="1"/>
<dbReference type="EC" id="3.5.1.2" evidence="1"/>
<dbReference type="EMBL" id="CP000240">
    <property type="protein sequence ID" value="ABD01282.1"/>
    <property type="molecule type" value="Genomic_DNA"/>
</dbReference>
<dbReference type="RefSeq" id="WP_011431951.1">
    <property type="nucleotide sequence ID" value="NC_007776.1"/>
</dbReference>
<dbReference type="SMR" id="Q2JPK0"/>
<dbReference type="STRING" id="321332.CYB_0284"/>
<dbReference type="KEGG" id="cyb:CYB_0284"/>
<dbReference type="eggNOG" id="COG0047">
    <property type="taxonomic scope" value="Bacteria"/>
</dbReference>
<dbReference type="HOGENOM" id="CLU_001031_3_1_3"/>
<dbReference type="UniPathway" id="UPA00074">
    <property type="reaction ID" value="UER00128"/>
</dbReference>
<dbReference type="Proteomes" id="UP000001938">
    <property type="component" value="Chromosome"/>
</dbReference>
<dbReference type="GO" id="GO:0005737">
    <property type="term" value="C:cytoplasm"/>
    <property type="evidence" value="ECO:0007669"/>
    <property type="project" value="UniProtKB-SubCell"/>
</dbReference>
<dbReference type="GO" id="GO:0005524">
    <property type="term" value="F:ATP binding"/>
    <property type="evidence" value="ECO:0007669"/>
    <property type="project" value="UniProtKB-KW"/>
</dbReference>
<dbReference type="GO" id="GO:0004359">
    <property type="term" value="F:glutaminase activity"/>
    <property type="evidence" value="ECO:0007669"/>
    <property type="project" value="UniProtKB-EC"/>
</dbReference>
<dbReference type="GO" id="GO:0004642">
    <property type="term" value="F:phosphoribosylformylglycinamidine synthase activity"/>
    <property type="evidence" value="ECO:0007669"/>
    <property type="project" value="UniProtKB-UniRule"/>
</dbReference>
<dbReference type="GO" id="GO:0006189">
    <property type="term" value="P:'de novo' IMP biosynthetic process"/>
    <property type="evidence" value="ECO:0007669"/>
    <property type="project" value="UniProtKB-UniRule"/>
</dbReference>
<dbReference type="CDD" id="cd01740">
    <property type="entry name" value="GATase1_FGAR_AT"/>
    <property type="match status" value="1"/>
</dbReference>
<dbReference type="Gene3D" id="3.40.50.880">
    <property type="match status" value="1"/>
</dbReference>
<dbReference type="HAMAP" id="MF_00421">
    <property type="entry name" value="PurQ"/>
    <property type="match status" value="1"/>
</dbReference>
<dbReference type="InterPro" id="IPR029062">
    <property type="entry name" value="Class_I_gatase-like"/>
</dbReference>
<dbReference type="InterPro" id="IPR010075">
    <property type="entry name" value="PRibForGlyAmidine_synth_PurQ"/>
</dbReference>
<dbReference type="NCBIfam" id="TIGR01737">
    <property type="entry name" value="FGAM_synth_I"/>
    <property type="match status" value="1"/>
</dbReference>
<dbReference type="NCBIfam" id="NF002957">
    <property type="entry name" value="PRK03619.1"/>
    <property type="match status" value="1"/>
</dbReference>
<dbReference type="PANTHER" id="PTHR47552">
    <property type="entry name" value="PHOSPHORIBOSYLFORMYLGLYCINAMIDINE SYNTHASE SUBUNIT PURQ"/>
    <property type="match status" value="1"/>
</dbReference>
<dbReference type="PANTHER" id="PTHR47552:SF1">
    <property type="entry name" value="PHOSPHORIBOSYLFORMYLGLYCINAMIDINE SYNTHASE SUBUNIT PURQ"/>
    <property type="match status" value="1"/>
</dbReference>
<dbReference type="Pfam" id="PF13507">
    <property type="entry name" value="GATase_5"/>
    <property type="match status" value="1"/>
</dbReference>
<dbReference type="PIRSF" id="PIRSF001586">
    <property type="entry name" value="FGAM_synth_I"/>
    <property type="match status" value="1"/>
</dbReference>
<dbReference type="SMART" id="SM01211">
    <property type="entry name" value="GATase_5"/>
    <property type="match status" value="1"/>
</dbReference>
<dbReference type="SUPFAM" id="SSF52317">
    <property type="entry name" value="Class I glutamine amidotransferase-like"/>
    <property type="match status" value="1"/>
</dbReference>
<dbReference type="PROSITE" id="PS51273">
    <property type="entry name" value="GATASE_TYPE_1"/>
    <property type="match status" value="1"/>
</dbReference>
<gene>
    <name evidence="1" type="primary">purQ</name>
    <name type="ordered locus">CYB_0284</name>
</gene>
<comment type="function">
    <text evidence="1">Part of the phosphoribosylformylglycinamidine synthase complex involved in the purines biosynthetic pathway. Catalyzes the ATP-dependent conversion of formylglycinamide ribonucleotide (FGAR) and glutamine to yield formylglycinamidine ribonucleotide (FGAM) and glutamate. The FGAM synthase complex is composed of three subunits. PurQ produces an ammonia molecule by converting glutamine to glutamate. PurL transfers the ammonia molecule to FGAR to form FGAM in an ATP-dependent manner. PurS interacts with PurQ and PurL and is thought to assist in the transfer of the ammonia molecule from PurQ to PurL.</text>
</comment>
<comment type="catalytic activity">
    <reaction evidence="1">
        <text>N(2)-formyl-N(1)-(5-phospho-beta-D-ribosyl)glycinamide + L-glutamine + ATP + H2O = 2-formamido-N(1)-(5-O-phospho-beta-D-ribosyl)acetamidine + L-glutamate + ADP + phosphate + H(+)</text>
        <dbReference type="Rhea" id="RHEA:17129"/>
        <dbReference type="ChEBI" id="CHEBI:15377"/>
        <dbReference type="ChEBI" id="CHEBI:15378"/>
        <dbReference type="ChEBI" id="CHEBI:29985"/>
        <dbReference type="ChEBI" id="CHEBI:30616"/>
        <dbReference type="ChEBI" id="CHEBI:43474"/>
        <dbReference type="ChEBI" id="CHEBI:58359"/>
        <dbReference type="ChEBI" id="CHEBI:147286"/>
        <dbReference type="ChEBI" id="CHEBI:147287"/>
        <dbReference type="ChEBI" id="CHEBI:456216"/>
        <dbReference type="EC" id="6.3.5.3"/>
    </reaction>
</comment>
<comment type="catalytic activity">
    <reaction evidence="1">
        <text>L-glutamine + H2O = L-glutamate + NH4(+)</text>
        <dbReference type="Rhea" id="RHEA:15889"/>
        <dbReference type="ChEBI" id="CHEBI:15377"/>
        <dbReference type="ChEBI" id="CHEBI:28938"/>
        <dbReference type="ChEBI" id="CHEBI:29985"/>
        <dbReference type="ChEBI" id="CHEBI:58359"/>
        <dbReference type="EC" id="3.5.1.2"/>
    </reaction>
</comment>
<comment type="pathway">
    <text evidence="1">Purine metabolism; IMP biosynthesis via de novo pathway; 5-amino-1-(5-phospho-D-ribosyl)imidazole from N(2)-formyl-N(1)-(5-phospho-D-ribosyl)glycinamide: step 1/2.</text>
</comment>
<comment type="subunit">
    <text evidence="1">Part of the FGAM synthase complex composed of 1 PurL, 1 PurQ and 2 PurS subunits.</text>
</comment>
<comment type="subcellular location">
    <subcellularLocation>
        <location evidence="1">Cytoplasm</location>
    </subcellularLocation>
</comment>
<keyword id="KW-0067">ATP-binding</keyword>
<keyword id="KW-0963">Cytoplasm</keyword>
<keyword id="KW-0315">Glutamine amidotransferase</keyword>
<keyword id="KW-0378">Hydrolase</keyword>
<keyword id="KW-0436">Ligase</keyword>
<keyword id="KW-0547">Nucleotide-binding</keyword>
<keyword id="KW-0658">Purine biosynthesis</keyword>
<keyword id="KW-1185">Reference proteome</keyword>
<sequence>MAGVRFGVVVFPGSNCDRDVAWVTRGLLGCPTRLIWHRETDLSELDVVVLPGGFSYGDYLRCGAIARFAPVMGSLKEHAARGGYVLGICNGFQILTEAGLLPGALVRNANLHFICDRVGIRVERQDLPWTSAYPQGSTLTLPIAHGEGRYTCDPDTLKQLQDRGQIVFRYAPVAPNGSVDNIAGICDPSGRILGLMPHPERAADPDLPGQDGIPFWQSILRSFAA</sequence>
<name>PURQ_SYNJB</name>
<evidence type="ECO:0000255" key="1">
    <source>
        <dbReference type="HAMAP-Rule" id="MF_00421"/>
    </source>
</evidence>
<protein>
    <recommendedName>
        <fullName evidence="1">Phosphoribosylformylglycinamidine synthase subunit PurQ</fullName>
        <shortName evidence="1">FGAM synthase</shortName>
        <ecNumber evidence="1">6.3.5.3</ecNumber>
    </recommendedName>
    <alternativeName>
        <fullName evidence="1">Formylglycinamide ribonucleotide amidotransferase subunit I</fullName>
        <shortName evidence="1">FGAR amidotransferase I</shortName>
        <shortName evidence="1">FGAR-AT I</shortName>
    </alternativeName>
    <alternativeName>
        <fullName evidence="1">Glutaminase PurQ</fullName>
        <ecNumber evidence="1">3.5.1.2</ecNumber>
    </alternativeName>
    <alternativeName>
        <fullName evidence="1">Phosphoribosylformylglycinamidine synthase subunit I</fullName>
    </alternativeName>
</protein>
<feature type="chain" id="PRO_0000252739" description="Phosphoribosylformylglycinamidine synthase subunit PurQ">
    <location>
        <begin position="1"/>
        <end position="225"/>
    </location>
</feature>
<feature type="domain" description="Glutamine amidotransferase type-1" evidence="1">
    <location>
        <begin position="6"/>
        <end position="225"/>
    </location>
</feature>
<feature type="active site" description="Nucleophile" evidence="1">
    <location>
        <position position="89"/>
    </location>
</feature>
<feature type="active site" evidence="1">
    <location>
        <position position="198"/>
    </location>
</feature>
<feature type="active site" evidence="1">
    <location>
        <position position="200"/>
    </location>
</feature>
<accession>Q2JPK0</accession>